<organism>
    <name type="scientific">Paraburkholderia phymatum (strain DSM 17167 / CIP 108236 / LMG 21445 / STM815)</name>
    <name type="common">Burkholderia phymatum</name>
    <dbReference type="NCBI Taxonomy" id="391038"/>
    <lineage>
        <taxon>Bacteria</taxon>
        <taxon>Pseudomonadati</taxon>
        <taxon>Pseudomonadota</taxon>
        <taxon>Betaproteobacteria</taxon>
        <taxon>Burkholderiales</taxon>
        <taxon>Burkholderiaceae</taxon>
        <taxon>Paraburkholderia</taxon>
    </lineage>
</organism>
<protein>
    <recommendedName>
        <fullName evidence="1">Phosphoenolpyruvate carboxykinase [GTP]</fullName>
        <shortName evidence="1">PEP carboxykinase</shortName>
        <shortName evidence="1">PEPCK</shortName>
        <ecNumber evidence="1">4.1.1.32</ecNumber>
    </recommendedName>
</protein>
<reference key="1">
    <citation type="journal article" date="2014" name="Stand. Genomic Sci.">
        <title>Complete genome sequence of Burkholderia phymatum STM815(T), a broad host range and efficient nitrogen-fixing symbiont of Mimosa species.</title>
        <authorList>
            <person name="Moulin L."/>
            <person name="Klonowska A."/>
            <person name="Caroline B."/>
            <person name="Booth K."/>
            <person name="Vriezen J.A."/>
            <person name="Melkonian R."/>
            <person name="James E.K."/>
            <person name="Young J.P."/>
            <person name="Bena G."/>
            <person name="Hauser L."/>
            <person name="Land M."/>
            <person name="Kyrpides N."/>
            <person name="Bruce D."/>
            <person name="Chain P."/>
            <person name="Copeland A."/>
            <person name="Pitluck S."/>
            <person name="Woyke T."/>
            <person name="Lizotte-Waniewski M."/>
            <person name="Bristow J."/>
            <person name="Riley M."/>
        </authorList>
    </citation>
    <scope>NUCLEOTIDE SEQUENCE [LARGE SCALE GENOMIC DNA]</scope>
    <source>
        <strain>DSM 17167 / CIP 108236 / LMG 21445 / STM815</strain>
    </source>
</reference>
<sequence length="618" mass="68288">MNHPAFAAHSTLEAPAWVKHKKLIEWVQRVAALAKPERIVWCDGSQEEYDRLTAQMVAAGTLRRLNPAKRPNSYLACSDPSDVARVEDRTFICSQRREDAGPTNNWIAPAEMRATLDGLFDGAMRGRTMYVVPFSMGPLGSPIAHIGVELSDSPYVVSNMRIMTRMGRKVYDVLGEDGEFVPCVHSVGAPLAAGQKDVAWPCNDTKYIVHFPESREIWSYGSGYGGNALLGKKCFALRIASTMGRAEGWLAEHMLVLGVTSPEGKKHHVAAAFPSACGKTNFAMLIPPQGMNGWKITTIGDDIAWIKPGKDGRLYAINPEAGYFGVAPGTSEKTNFNAMATLKENVIFTNVALTDDGDVWWEGMTDEPPAHLIDWQGRDWTPAIAKETGRKAAHPNARFTAPASQCPSIDADWENPAGVPIDAFVFGGRRSTTVPLVTEARDWVEGVYMAATMGSETTAAAAGQQGVVRRDPFAMLPFCGYNMSDYFAHWLKTGVKLEQMSVRTPKIFCVNWFRKGDDGKFVWPGFGENMRVLRWMVDRIEGKAKGEEHAFGVSPRYDDLDWSGLDFTREQFEQVISVDDAAWRKELALHSELFDTLKQGLPVALQDTRSALEKKLTA</sequence>
<dbReference type="EC" id="4.1.1.32" evidence="1"/>
<dbReference type="EMBL" id="CP001043">
    <property type="protein sequence ID" value="ACC69225.1"/>
    <property type="molecule type" value="Genomic_DNA"/>
</dbReference>
<dbReference type="RefSeq" id="WP_012399456.1">
    <property type="nucleotide sequence ID" value="NC_010622.1"/>
</dbReference>
<dbReference type="SMR" id="B2JJT8"/>
<dbReference type="STRING" id="391038.Bphy_0030"/>
<dbReference type="KEGG" id="bph:Bphy_0030"/>
<dbReference type="eggNOG" id="COG1274">
    <property type="taxonomic scope" value="Bacteria"/>
</dbReference>
<dbReference type="HOGENOM" id="CLU_028872_1_1_4"/>
<dbReference type="OrthoDB" id="9758871at2"/>
<dbReference type="UniPathway" id="UPA00138"/>
<dbReference type="Proteomes" id="UP000001192">
    <property type="component" value="Chromosome 1"/>
</dbReference>
<dbReference type="GO" id="GO:0005829">
    <property type="term" value="C:cytosol"/>
    <property type="evidence" value="ECO:0007669"/>
    <property type="project" value="TreeGrafter"/>
</dbReference>
<dbReference type="GO" id="GO:0005525">
    <property type="term" value="F:GTP binding"/>
    <property type="evidence" value="ECO:0007669"/>
    <property type="project" value="UniProtKB-UniRule"/>
</dbReference>
<dbReference type="GO" id="GO:0030145">
    <property type="term" value="F:manganese ion binding"/>
    <property type="evidence" value="ECO:0007669"/>
    <property type="project" value="UniProtKB-UniRule"/>
</dbReference>
<dbReference type="GO" id="GO:0004613">
    <property type="term" value="F:phosphoenolpyruvate carboxykinase (GTP) activity"/>
    <property type="evidence" value="ECO:0007669"/>
    <property type="project" value="UniProtKB-UniRule"/>
</dbReference>
<dbReference type="GO" id="GO:0071333">
    <property type="term" value="P:cellular response to glucose stimulus"/>
    <property type="evidence" value="ECO:0007669"/>
    <property type="project" value="TreeGrafter"/>
</dbReference>
<dbReference type="GO" id="GO:0006094">
    <property type="term" value="P:gluconeogenesis"/>
    <property type="evidence" value="ECO:0007669"/>
    <property type="project" value="UniProtKB-UniRule"/>
</dbReference>
<dbReference type="GO" id="GO:0046327">
    <property type="term" value="P:glycerol biosynthetic process from pyruvate"/>
    <property type="evidence" value="ECO:0007669"/>
    <property type="project" value="TreeGrafter"/>
</dbReference>
<dbReference type="GO" id="GO:0006107">
    <property type="term" value="P:oxaloacetate metabolic process"/>
    <property type="evidence" value="ECO:0007669"/>
    <property type="project" value="TreeGrafter"/>
</dbReference>
<dbReference type="GO" id="GO:0019543">
    <property type="term" value="P:propionate catabolic process"/>
    <property type="evidence" value="ECO:0007669"/>
    <property type="project" value="TreeGrafter"/>
</dbReference>
<dbReference type="GO" id="GO:0033993">
    <property type="term" value="P:response to lipid"/>
    <property type="evidence" value="ECO:0007669"/>
    <property type="project" value="TreeGrafter"/>
</dbReference>
<dbReference type="GO" id="GO:0042594">
    <property type="term" value="P:response to starvation"/>
    <property type="evidence" value="ECO:0007669"/>
    <property type="project" value="TreeGrafter"/>
</dbReference>
<dbReference type="CDD" id="cd00819">
    <property type="entry name" value="PEPCK_GTP"/>
    <property type="match status" value="1"/>
</dbReference>
<dbReference type="FunFam" id="3.40.449.10:FF:000005">
    <property type="entry name" value="Phosphoenolpyruvate carboxykinase [GTP]"/>
    <property type="match status" value="1"/>
</dbReference>
<dbReference type="Gene3D" id="3.90.228.20">
    <property type="match status" value="1"/>
</dbReference>
<dbReference type="Gene3D" id="3.40.449.10">
    <property type="entry name" value="Phosphoenolpyruvate Carboxykinase, domain 1"/>
    <property type="match status" value="1"/>
</dbReference>
<dbReference type="Gene3D" id="2.170.8.10">
    <property type="entry name" value="Phosphoenolpyruvate Carboxykinase, domain 2"/>
    <property type="match status" value="1"/>
</dbReference>
<dbReference type="HAMAP" id="MF_00452">
    <property type="entry name" value="PEPCK_GTP"/>
    <property type="match status" value="1"/>
</dbReference>
<dbReference type="InterPro" id="IPR018091">
    <property type="entry name" value="PEP_carboxykin_GTP_CS"/>
</dbReference>
<dbReference type="InterPro" id="IPR013035">
    <property type="entry name" value="PEP_carboxykinase_C"/>
</dbReference>
<dbReference type="InterPro" id="IPR008209">
    <property type="entry name" value="PEP_carboxykinase_GTP"/>
</dbReference>
<dbReference type="InterPro" id="IPR035077">
    <property type="entry name" value="PEP_carboxykinase_GTP_C"/>
</dbReference>
<dbReference type="InterPro" id="IPR035078">
    <property type="entry name" value="PEP_carboxykinase_GTP_N"/>
</dbReference>
<dbReference type="InterPro" id="IPR008210">
    <property type="entry name" value="PEP_carboxykinase_N"/>
</dbReference>
<dbReference type="NCBIfam" id="NF003253">
    <property type="entry name" value="PRK04210.1"/>
    <property type="match status" value="1"/>
</dbReference>
<dbReference type="PANTHER" id="PTHR11561">
    <property type="entry name" value="PHOSPHOENOLPYRUVATE CARBOXYKINASE"/>
    <property type="match status" value="1"/>
</dbReference>
<dbReference type="PANTHER" id="PTHR11561:SF0">
    <property type="entry name" value="PHOSPHOENOLPYRUVATE CARBOXYKINASE [GTP]-RELATED"/>
    <property type="match status" value="1"/>
</dbReference>
<dbReference type="Pfam" id="PF00821">
    <property type="entry name" value="PEPCK_GTP"/>
    <property type="match status" value="1"/>
</dbReference>
<dbReference type="Pfam" id="PF17297">
    <property type="entry name" value="PEPCK_N"/>
    <property type="match status" value="1"/>
</dbReference>
<dbReference type="PIRSF" id="PIRSF001348">
    <property type="entry name" value="PEP_carboxykinase_GTP"/>
    <property type="match status" value="1"/>
</dbReference>
<dbReference type="SUPFAM" id="SSF68923">
    <property type="entry name" value="PEP carboxykinase N-terminal domain"/>
    <property type="match status" value="1"/>
</dbReference>
<dbReference type="SUPFAM" id="SSF53795">
    <property type="entry name" value="PEP carboxykinase-like"/>
    <property type="match status" value="1"/>
</dbReference>
<dbReference type="PROSITE" id="PS00505">
    <property type="entry name" value="PEPCK_GTP"/>
    <property type="match status" value="1"/>
</dbReference>
<name>PCKG_PARP8</name>
<comment type="function">
    <text evidence="1">Catalyzes the conversion of oxaloacetate (OAA) to phosphoenolpyruvate (PEP), the rate-limiting step in the metabolic pathway that produces glucose from lactate and other precursors derived from the citric acid cycle.</text>
</comment>
<comment type="catalytic activity">
    <reaction evidence="1">
        <text>oxaloacetate + GTP = phosphoenolpyruvate + GDP + CO2</text>
        <dbReference type="Rhea" id="RHEA:10388"/>
        <dbReference type="ChEBI" id="CHEBI:16452"/>
        <dbReference type="ChEBI" id="CHEBI:16526"/>
        <dbReference type="ChEBI" id="CHEBI:37565"/>
        <dbReference type="ChEBI" id="CHEBI:58189"/>
        <dbReference type="ChEBI" id="CHEBI:58702"/>
        <dbReference type="EC" id="4.1.1.32"/>
    </reaction>
</comment>
<comment type="cofactor">
    <cofactor evidence="1">
        <name>Mn(2+)</name>
        <dbReference type="ChEBI" id="CHEBI:29035"/>
    </cofactor>
    <text evidence="1">Binds 1 Mn(2+) ion per subunit.</text>
</comment>
<comment type="pathway">
    <text evidence="1">Carbohydrate biosynthesis; gluconeogenesis.</text>
</comment>
<comment type="subunit">
    <text evidence="1">Monomer.</text>
</comment>
<comment type="subcellular location">
    <subcellularLocation>
        <location evidence="1">Cytoplasm</location>
    </subcellularLocation>
</comment>
<comment type="similarity">
    <text evidence="1">Belongs to the phosphoenolpyruvate carboxykinase [GTP] family.</text>
</comment>
<gene>
    <name evidence="1" type="primary">pckG</name>
    <name type="ordered locus">Bphy_0030</name>
</gene>
<feature type="chain" id="PRO_1000125044" description="Phosphoenolpyruvate carboxykinase [GTP]">
    <location>
        <begin position="1"/>
        <end position="618"/>
    </location>
</feature>
<feature type="active site" evidence="1">
    <location>
        <position position="277"/>
    </location>
</feature>
<feature type="binding site" evidence="1">
    <location>
        <position position="85"/>
    </location>
    <ligand>
        <name>substrate</name>
    </ligand>
</feature>
<feature type="binding site" evidence="1">
    <location>
        <begin position="224"/>
        <end position="226"/>
    </location>
    <ligand>
        <name>substrate</name>
    </ligand>
</feature>
<feature type="binding site" evidence="1">
    <location>
        <position position="233"/>
    </location>
    <ligand>
        <name>Mn(2+)</name>
        <dbReference type="ChEBI" id="CHEBI:29035"/>
    </ligand>
</feature>
<feature type="binding site" evidence="1">
    <location>
        <position position="253"/>
    </location>
    <ligand>
        <name>Mn(2+)</name>
        <dbReference type="ChEBI" id="CHEBI:29035"/>
    </ligand>
</feature>
<feature type="binding site" evidence="1">
    <location>
        <position position="275"/>
    </location>
    <ligand>
        <name>substrate</name>
    </ligand>
</feature>
<feature type="binding site" evidence="1">
    <location>
        <begin position="276"/>
        <end position="281"/>
    </location>
    <ligand>
        <name>GTP</name>
        <dbReference type="ChEBI" id="CHEBI:37565"/>
    </ligand>
</feature>
<feature type="binding site" evidence="1">
    <location>
        <position position="302"/>
    </location>
    <ligand>
        <name>Mn(2+)</name>
        <dbReference type="ChEBI" id="CHEBI:29035"/>
    </ligand>
</feature>
<feature type="binding site" evidence="1">
    <location>
        <begin position="396"/>
        <end position="398"/>
    </location>
    <ligand>
        <name>substrate</name>
    </ligand>
</feature>
<feature type="binding site" evidence="1">
    <location>
        <position position="398"/>
    </location>
    <ligand>
        <name>GTP</name>
        <dbReference type="ChEBI" id="CHEBI:37565"/>
    </ligand>
</feature>
<feature type="binding site" evidence="1">
    <location>
        <position position="429"/>
    </location>
    <ligand>
        <name>GTP</name>
        <dbReference type="ChEBI" id="CHEBI:37565"/>
    </ligand>
</feature>
<feature type="binding site" evidence="1">
    <location>
        <begin position="526"/>
        <end position="529"/>
    </location>
    <ligand>
        <name>GTP</name>
        <dbReference type="ChEBI" id="CHEBI:37565"/>
    </ligand>
</feature>
<keyword id="KW-0963">Cytoplasm</keyword>
<keyword id="KW-0210">Decarboxylase</keyword>
<keyword id="KW-0312">Gluconeogenesis</keyword>
<keyword id="KW-0342">GTP-binding</keyword>
<keyword id="KW-0456">Lyase</keyword>
<keyword id="KW-0464">Manganese</keyword>
<keyword id="KW-0479">Metal-binding</keyword>
<keyword id="KW-0547">Nucleotide-binding</keyword>
<keyword id="KW-1185">Reference proteome</keyword>
<proteinExistence type="inferred from homology"/>
<evidence type="ECO:0000255" key="1">
    <source>
        <dbReference type="HAMAP-Rule" id="MF_00452"/>
    </source>
</evidence>
<accession>B2JJT8</accession>